<organism>
    <name type="scientific">Fusarium culmorum</name>
    <dbReference type="NCBI Taxonomy" id="5516"/>
    <lineage>
        <taxon>Eukaryota</taxon>
        <taxon>Fungi</taxon>
        <taxon>Dikarya</taxon>
        <taxon>Ascomycota</taxon>
        <taxon>Pezizomycotina</taxon>
        <taxon>Sordariomycetes</taxon>
        <taxon>Hypocreomycetidae</taxon>
        <taxon>Hypocreales</taxon>
        <taxon>Nectriaceae</taxon>
        <taxon>Fusarium</taxon>
    </lineage>
</organism>
<proteinExistence type="evidence at protein level"/>
<dbReference type="EMBL" id="AY077706">
    <property type="protein sequence ID" value="AAL79930.1"/>
    <property type="molecule type" value="mRNA"/>
</dbReference>
<dbReference type="SMR" id="Q8TFM9"/>
<dbReference type="Allergome" id="3288">
    <property type="allergen name" value="Fus c 1.0101"/>
</dbReference>
<dbReference type="Allergome" id="700">
    <property type="allergen name" value="Fus c 1"/>
</dbReference>
<dbReference type="OMA" id="MKVIASY"/>
<dbReference type="OrthoDB" id="1227494at2759"/>
<dbReference type="GO" id="GO:0022625">
    <property type="term" value="C:cytosolic large ribosomal subunit"/>
    <property type="evidence" value="ECO:0007669"/>
    <property type="project" value="InterPro"/>
</dbReference>
<dbReference type="GO" id="GO:0003735">
    <property type="term" value="F:structural constituent of ribosome"/>
    <property type="evidence" value="ECO:0007669"/>
    <property type="project" value="InterPro"/>
</dbReference>
<dbReference type="GO" id="GO:0002182">
    <property type="term" value="P:cytoplasmic translational elongation"/>
    <property type="evidence" value="ECO:0007669"/>
    <property type="project" value="InterPro"/>
</dbReference>
<dbReference type="CDD" id="cd05833">
    <property type="entry name" value="Ribosomal_P2"/>
    <property type="match status" value="1"/>
</dbReference>
<dbReference type="FunFam" id="1.10.10.1410:FF:000002">
    <property type="entry name" value="60S acidic ribosomal protein P2"/>
    <property type="match status" value="1"/>
</dbReference>
<dbReference type="Gene3D" id="1.10.10.1410">
    <property type="match status" value="1"/>
</dbReference>
<dbReference type="HAMAP" id="MF_01478">
    <property type="entry name" value="Ribosomal_L12_arch"/>
    <property type="match status" value="1"/>
</dbReference>
<dbReference type="InterPro" id="IPR038716">
    <property type="entry name" value="P1/P2_N_sf"/>
</dbReference>
<dbReference type="InterPro" id="IPR027534">
    <property type="entry name" value="Ribosomal_P1/P2"/>
</dbReference>
<dbReference type="InterPro" id="IPR044076">
    <property type="entry name" value="Ribosomal_P2"/>
</dbReference>
<dbReference type="PANTHER" id="PTHR21141">
    <property type="entry name" value="60S ACIDIC RIBOSOMAL PROTEIN FAMILY MEMBER"/>
    <property type="match status" value="1"/>
</dbReference>
<dbReference type="PANTHER" id="PTHR21141:SF5">
    <property type="entry name" value="LARGE RIBOSOMAL SUBUNIT PROTEIN P2"/>
    <property type="match status" value="1"/>
</dbReference>
<dbReference type="Pfam" id="PF00428">
    <property type="entry name" value="Ribosomal_60s"/>
    <property type="match status" value="1"/>
</dbReference>
<accession>Q8TFM9</accession>
<keyword id="KW-0020">Allergen</keyword>
<keyword id="KW-0597">Phosphoprotein</keyword>
<keyword id="KW-0687">Ribonucleoprotein</keyword>
<keyword id="KW-0689">Ribosomal protein</keyword>
<name>RLA2_FUSCU</name>
<reference key="1">
    <citation type="journal article" date="2003" name="Mol. Immunol.">
        <title>Molecular cloning and immunological characterisation of potential allergens from the mould Fusarium culmorum.</title>
        <authorList>
            <person name="Hoff M."/>
            <person name="Ballmer-Weber B.K."/>
            <person name="Niggemann B."/>
            <person name="Cistero-Bahima A."/>
            <person name="San Miguel-Moncin M."/>
            <person name="Conti A."/>
            <person name="Haustein D."/>
            <person name="Vieths S."/>
        </authorList>
    </citation>
    <scope>NUCLEOTIDE SEQUENCE [MRNA]</scope>
    <scope>ALLERGEN</scope>
</reference>
<sequence>MKHLAAYLLLGLGGNTSPSAADVKAVLTSVGIDADEDRLNKLISELEGKDIQQLIAEGSEKLASVPSGGAGGASGGAAAAGGAAEEAKEEEKEEEKEESDEDMGFGLFD</sequence>
<feature type="chain" id="PRO_0000157678" description="Large ribosomal subunit protein P2">
    <location>
        <begin position="1"/>
        <end position="109"/>
    </location>
</feature>
<feature type="region of interest" description="Disordered" evidence="2">
    <location>
        <begin position="63"/>
        <end position="109"/>
    </location>
</feature>
<feature type="compositionally biased region" description="Gly residues" evidence="2">
    <location>
        <begin position="68"/>
        <end position="79"/>
    </location>
</feature>
<feature type="compositionally biased region" description="Acidic residues" evidence="2">
    <location>
        <begin position="91"/>
        <end position="103"/>
    </location>
</feature>
<feature type="modified residue" description="Phosphoserine" evidence="1">
    <location>
        <position position="99"/>
    </location>
</feature>
<protein>
    <recommendedName>
        <fullName evidence="4">Large ribosomal subunit protein P2</fullName>
    </recommendedName>
    <alternativeName>
        <fullName>60S acidic ribosomal protein P2</fullName>
    </alternativeName>
    <allergenName>Fus c 1</allergenName>
</protein>
<evidence type="ECO:0000250" key="1"/>
<evidence type="ECO:0000256" key="2">
    <source>
        <dbReference type="SAM" id="MobiDB-lite"/>
    </source>
</evidence>
<evidence type="ECO:0000269" key="3">
    <source>
    </source>
</evidence>
<evidence type="ECO:0000305" key="4"/>
<comment type="function">
    <text evidence="1">Plays an important role in the elongation step of protein synthesis.</text>
</comment>
<comment type="subunit">
    <text>P1 and P2 exist as dimers at the large ribosomal subunit.</text>
</comment>
<comment type="allergen">
    <text evidence="3">Causes an allergic reaction in human. Binds to IgE.</text>
</comment>
<comment type="similarity">
    <text evidence="4">Belongs to the eukaryotic ribosomal protein P1/P2 family.</text>
</comment>